<evidence type="ECO:0000255" key="1">
    <source>
        <dbReference type="HAMAP-Rule" id="MF_00617"/>
    </source>
</evidence>
<keyword id="KW-0963">Cytoplasm</keyword>
<keyword id="KW-0378">Hydrolase</keyword>
<keyword id="KW-0460">Magnesium</keyword>
<keyword id="KW-0479">Metal-binding</keyword>
<keyword id="KW-1185">Reference proteome</keyword>
<name>MPGP_SALTY</name>
<protein>
    <recommendedName>
        <fullName evidence="1">Mannosyl-3-phosphoglycerate phosphatase</fullName>
        <shortName evidence="1">MPGP</shortName>
        <ecNumber evidence="1">3.1.3.70</ecNumber>
    </recommendedName>
</protein>
<comment type="catalytic activity">
    <reaction evidence="1">
        <text>2-O-(alpha-D-mannosyl)-3-phosphoglycerate + H2O = (2R)-2-O-(alpha-D-mannosyl)-glycerate + phosphate</text>
        <dbReference type="Rhea" id="RHEA:19309"/>
        <dbReference type="ChEBI" id="CHEBI:15377"/>
        <dbReference type="ChEBI" id="CHEBI:43474"/>
        <dbReference type="ChEBI" id="CHEBI:57541"/>
        <dbReference type="ChEBI" id="CHEBI:57744"/>
        <dbReference type="EC" id="3.1.3.70"/>
    </reaction>
</comment>
<comment type="cofactor">
    <cofactor evidence="1">
        <name>Mg(2+)</name>
        <dbReference type="ChEBI" id="CHEBI:18420"/>
    </cofactor>
</comment>
<comment type="subcellular location">
    <subcellularLocation>
        <location evidence="1">Cytoplasm</location>
    </subcellularLocation>
</comment>
<comment type="similarity">
    <text evidence="1">Belongs to the HAD-like hydrolase superfamily. MPGP family.</text>
</comment>
<organism>
    <name type="scientific">Salmonella typhimurium (strain LT2 / SGSC1412 / ATCC 700720)</name>
    <dbReference type="NCBI Taxonomy" id="99287"/>
    <lineage>
        <taxon>Bacteria</taxon>
        <taxon>Pseudomonadati</taxon>
        <taxon>Pseudomonadota</taxon>
        <taxon>Gammaproteobacteria</taxon>
        <taxon>Enterobacterales</taxon>
        <taxon>Enterobacteriaceae</taxon>
        <taxon>Salmonella</taxon>
    </lineage>
</organism>
<accession>P65417</accession>
<accession>Q8XGE1</accession>
<feature type="chain" id="PRO_0000184977" description="Mannosyl-3-phosphoglycerate phosphatase">
    <location>
        <begin position="1"/>
        <end position="271"/>
    </location>
</feature>
<feature type="active site" description="Nucleophile" evidence="1">
    <location>
        <position position="13"/>
    </location>
</feature>
<feature type="binding site" evidence="1">
    <location>
        <position position="13"/>
    </location>
    <ligand>
        <name>Mg(2+)</name>
        <dbReference type="ChEBI" id="CHEBI:18420"/>
    </ligand>
</feature>
<feature type="binding site" evidence="1">
    <location>
        <position position="15"/>
    </location>
    <ligand>
        <name>Mg(2+)</name>
        <dbReference type="ChEBI" id="CHEBI:18420"/>
    </ligand>
</feature>
<feature type="binding site" evidence="1">
    <location>
        <position position="214"/>
    </location>
    <ligand>
        <name>Mg(2+)</name>
        <dbReference type="ChEBI" id="CHEBI:18420"/>
    </ligand>
</feature>
<sequence length="271" mass="30925">MLSIHDPLLIFTDLDGTLLNSHTFEWQPAAPWLTRLHESGVPVILCSSKTAAEMLQLQTTLNLQGLPLIAENGAVIQLDVHWEDHPNYPRLIAGISHNEIRLVLHKLREKEQFKFTTFDDVDDQVISEWTGLNRAQSALTRLHEASVSLIWRDSDERMAQFVARLNDLGLQFVHGARFWHVLDASAGKDQAANWLIEAYRRQWRARPLTLGLGDGPNDAPLLDVMDYAVVVKGLNREGVHLRNDDPQRVYRSQNEGPDGWREGMDYFFSRS</sequence>
<gene>
    <name type="primary">yedP</name>
    <name type="ordered locus">STM1986</name>
</gene>
<reference key="1">
    <citation type="journal article" date="2001" name="Nature">
        <title>Complete genome sequence of Salmonella enterica serovar Typhimurium LT2.</title>
        <authorList>
            <person name="McClelland M."/>
            <person name="Sanderson K.E."/>
            <person name="Spieth J."/>
            <person name="Clifton S.W."/>
            <person name="Latreille P."/>
            <person name="Courtney L."/>
            <person name="Porwollik S."/>
            <person name="Ali J."/>
            <person name="Dante M."/>
            <person name="Du F."/>
            <person name="Hou S."/>
            <person name="Layman D."/>
            <person name="Leonard S."/>
            <person name="Nguyen C."/>
            <person name="Scott K."/>
            <person name="Holmes A."/>
            <person name="Grewal N."/>
            <person name="Mulvaney E."/>
            <person name="Ryan E."/>
            <person name="Sun H."/>
            <person name="Florea L."/>
            <person name="Miller W."/>
            <person name="Stoneking T."/>
            <person name="Nhan M."/>
            <person name="Waterston R."/>
            <person name="Wilson R.K."/>
        </authorList>
    </citation>
    <scope>NUCLEOTIDE SEQUENCE [LARGE SCALE GENOMIC DNA]</scope>
    <source>
        <strain>LT2 / SGSC1412 / ATCC 700720</strain>
    </source>
</reference>
<proteinExistence type="inferred from homology"/>
<dbReference type="EC" id="3.1.3.70" evidence="1"/>
<dbReference type="EMBL" id="AE006468">
    <property type="protein sequence ID" value="AAL20896.1"/>
    <property type="molecule type" value="Genomic_DNA"/>
</dbReference>
<dbReference type="RefSeq" id="NP_460937.1">
    <property type="nucleotide sequence ID" value="NC_003197.2"/>
</dbReference>
<dbReference type="RefSeq" id="WP_000948794.1">
    <property type="nucleotide sequence ID" value="NC_003197.2"/>
</dbReference>
<dbReference type="SMR" id="P65417"/>
<dbReference type="STRING" id="99287.STM1986"/>
<dbReference type="PaxDb" id="99287-STM1986"/>
<dbReference type="GeneID" id="1253507"/>
<dbReference type="KEGG" id="stm:STM1986"/>
<dbReference type="PATRIC" id="fig|99287.12.peg.2102"/>
<dbReference type="HOGENOM" id="CLU_063016_0_0_6"/>
<dbReference type="OMA" id="KGNRMSH"/>
<dbReference type="PhylomeDB" id="P65417"/>
<dbReference type="BioCyc" id="SENT99287:STM1986-MONOMER"/>
<dbReference type="Proteomes" id="UP000001014">
    <property type="component" value="Chromosome"/>
</dbReference>
<dbReference type="GO" id="GO:0005829">
    <property type="term" value="C:cytosol"/>
    <property type="evidence" value="ECO:0000318"/>
    <property type="project" value="GO_Central"/>
</dbReference>
<dbReference type="GO" id="GO:0000287">
    <property type="term" value="F:magnesium ion binding"/>
    <property type="evidence" value="ECO:0000318"/>
    <property type="project" value="GO_Central"/>
</dbReference>
<dbReference type="GO" id="GO:0050531">
    <property type="term" value="F:mannosyl-3-phosphoglycerate phosphatase activity"/>
    <property type="evidence" value="ECO:0007669"/>
    <property type="project" value="UniProtKB-UniRule"/>
</dbReference>
<dbReference type="GO" id="GO:0016791">
    <property type="term" value="F:phosphatase activity"/>
    <property type="evidence" value="ECO:0000318"/>
    <property type="project" value="GO_Central"/>
</dbReference>
<dbReference type="GO" id="GO:0051479">
    <property type="term" value="P:mannosylglycerate biosynthetic process"/>
    <property type="evidence" value="ECO:0007669"/>
    <property type="project" value="InterPro"/>
</dbReference>
<dbReference type="CDD" id="cd07507">
    <property type="entry name" value="HAD_Pase"/>
    <property type="match status" value="1"/>
</dbReference>
<dbReference type="Gene3D" id="3.40.50.1000">
    <property type="entry name" value="HAD superfamily/HAD-like"/>
    <property type="match status" value="1"/>
</dbReference>
<dbReference type="Gene3D" id="3.30.980.20">
    <property type="entry name" value="Putative mannosyl-3-phosphoglycerate phosphatase, domain 2"/>
    <property type="match status" value="1"/>
</dbReference>
<dbReference type="HAMAP" id="MF_00617">
    <property type="entry name" value="MPGP_rel"/>
    <property type="match status" value="1"/>
</dbReference>
<dbReference type="InterPro" id="IPR036412">
    <property type="entry name" value="HAD-like_sf"/>
</dbReference>
<dbReference type="InterPro" id="IPR006381">
    <property type="entry name" value="HAD-SF-IIB-MPGP"/>
</dbReference>
<dbReference type="InterPro" id="IPR006379">
    <property type="entry name" value="HAD-SF_hydro_IIB"/>
</dbReference>
<dbReference type="InterPro" id="IPR023214">
    <property type="entry name" value="HAD_sf"/>
</dbReference>
<dbReference type="InterPro" id="IPR012815">
    <property type="entry name" value="MPG_Pase"/>
</dbReference>
<dbReference type="NCBIfam" id="TIGR01484">
    <property type="entry name" value="HAD-SF-IIB"/>
    <property type="match status" value="1"/>
</dbReference>
<dbReference type="NCBIfam" id="TIGR01486">
    <property type="entry name" value="HAD-SF-IIB-MPGP"/>
    <property type="match status" value="1"/>
</dbReference>
<dbReference type="NCBIfam" id="TIGR02463">
    <property type="entry name" value="MPGP_rel"/>
    <property type="match status" value="1"/>
</dbReference>
<dbReference type="NCBIfam" id="NF002976">
    <property type="entry name" value="PRK03669.1"/>
    <property type="match status" value="1"/>
</dbReference>
<dbReference type="PANTHER" id="PTHR10000:SF8">
    <property type="entry name" value="HAD SUPERFAMILY HYDROLASE-LIKE, TYPE 3"/>
    <property type="match status" value="1"/>
</dbReference>
<dbReference type="PANTHER" id="PTHR10000">
    <property type="entry name" value="PHOSPHOSERINE PHOSPHATASE"/>
    <property type="match status" value="1"/>
</dbReference>
<dbReference type="Pfam" id="PF08282">
    <property type="entry name" value="Hydrolase_3"/>
    <property type="match status" value="1"/>
</dbReference>
<dbReference type="SFLD" id="SFLDG01142">
    <property type="entry name" value="C2.B.2:_Mannosyl-3-phosphoglyc"/>
    <property type="match status" value="1"/>
</dbReference>
<dbReference type="SFLD" id="SFLDG01140">
    <property type="entry name" value="C2.B:_Phosphomannomutase_and_P"/>
    <property type="match status" value="1"/>
</dbReference>
<dbReference type="SUPFAM" id="SSF56784">
    <property type="entry name" value="HAD-like"/>
    <property type="match status" value="1"/>
</dbReference>